<protein>
    <recommendedName>
        <fullName evidence="1">Isocitrate dehydrogenase kinase/phosphatase</fullName>
        <shortName evidence="1">IDH kinase/phosphatase</shortName>
        <shortName evidence="1">IDHK/P</shortName>
        <ecNumber evidence="1">2.7.11.5</ecNumber>
        <ecNumber evidence="1">3.1.3.-</ecNumber>
    </recommendedName>
</protein>
<dbReference type="EC" id="2.7.11.5" evidence="1"/>
<dbReference type="EC" id="3.1.3.-" evidence="1"/>
<dbReference type="EMBL" id="CP001396">
    <property type="protein sequence ID" value="ACR63560.1"/>
    <property type="molecule type" value="Genomic_DNA"/>
</dbReference>
<dbReference type="RefSeq" id="WP_001137220.1">
    <property type="nucleotide sequence ID" value="NC_012759.1"/>
</dbReference>
<dbReference type="SMR" id="C5A0V3"/>
<dbReference type="KEGG" id="ebw:BWG_3672"/>
<dbReference type="HOGENOM" id="CLU_033804_1_1_6"/>
<dbReference type="GO" id="GO:0005737">
    <property type="term" value="C:cytoplasm"/>
    <property type="evidence" value="ECO:0007669"/>
    <property type="project" value="UniProtKB-SubCell"/>
</dbReference>
<dbReference type="GO" id="GO:0008772">
    <property type="term" value="F:[isocitrate dehydrogenase (NADP+)] kinase activity"/>
    <property type="evidence" value="ECO:0007669"/>
    <property type="project" value="UniProtKB-UniRule"/>
</dbReference>
<dbReference type="GO" id="GO:0016208">
    <property type="term" value="F:AMP binding"/>
    <property type="evidence" value="ECO:0007669"/>
    <property type="project" value="TreeGrafter"/>
</dbReference>
<dbReference type="GO" id="GO:0005524">
    <property type="term" value="F:ATP binding"/>
    <property type="evidence" value="ECO:0007669"/>
    <property type="project" value="UniProtKB-UniRule"/>
</dbReference>
<dbReference type="GO" id="GO:0004721">
    <property type="term" value="F:phosphoprotein phosphatase activity"/>
    <property type="evidence" value="ECO:0007669"/>
    <property type="project" value="UniProtKB-KW"/>
</dbReference>
<dbReference type="GO" id="GO:0004674">
    <property type="term" value="F:protein serine/threonine kinase activity"/>
    <property type="evidence" value="ECO:0007669"/>
    <property type="project" value="UniProtKB-KW"/>
</dbReference>
<dbReference type="GO" id="GO:0006006">
    <property type="term" value="P:glucose metabolic process"/>
    <property type="evidence" value="ECO:0007669"/>
    <property type="project" value="InterPro"/>
</dbReference>
<dbReference type="GO" id="GO:0006097">
    <property type="term" value="P:glyoxylate cycle"/>
    <property type="evidence" value="ECO:0007669"/>
    <property type="project" value="UniProtKB-UniRule"/>
</dbReference>
<dbReference type="GO" id="GO:0006099">
    <property type="term" value="P:tricarboxylic acid cycle"/>
    <property type="evidence" value="ECO:0007669"/>
    <property type="project" value="UniProtKB-UniRule"/>
</dbReference>
<dbReference type="HAMAP" id="MF_00747">
    <property type="entry name" value="AceK"/>
    <property type="match status" value="1"/>
</dbReference>
<dbReference type="InterPro" id="IPR046855">
    <property type="entry name" value="AceK_kinase"/>
</dbReference>
<dbReference type="InterPro" id="IPR046854">
    <property type="entry name" value="AceK_regulatory"/>
</dbReference>
<dbReference type="InterPro" id="IPR010452">
    <property type="entry name" value="Isocitrate_DH_AceK"/>
</dbReference>
<dbReference type="NCBIfam" id="NF002804">
    <property type="entry name" value="PRK02946.1"/>
    <property type="match status" value="1"/>
</dbReference>
<dbReference type="PANTHER" id="PTHR39559">
    <property type="match status" value="1"/>
</dbReference>
<dbReference type="PANTHER" id="PTHR39559:SF1">
    <property type="entry name" value="ISOCITRATE DEHYDROGENASE KINASE_PHOSPHATASE"/>
    <property type="match status" value="1"/>
</dbReference>
<dbReference type="Pfam" id="PF06315">
    <property type="entry name" value="AceK_kinase"/>
    <property type="match status" value="1"/>
</dbReference>
<dbReference type="Pfam" id="PF20423">
    <property type="entry name" value="AceK_regulatory"/>
    <property type="match status" value="1"/>
</dbReference>
<dbReference type="PIRSF" id="PIRSF000719">
    <property type="entry name" value="AceK"/>
    <property type="match status" value="1"/>
</dbReference>
<accession>C5A0V3</accession>
<sequence length="578" mass="67699">MPRGLELLIAQTILQGFDAQYGRFLEVTSGAQQRFEQADWHAVQQAMKNRIHLYDHHVGLVVEQLRCITNGQSTDAAFLLRVKEHYTRLLPDYPRFEIAESFFNSVYCRLFDHRSLTPERLFIFSSQPERRFRTIPRPLAKDFHPDHGWESLLMRVISDLPLRLRWQNKSRDIHYIIRHLTETLGTDNLAESHLQVANELFYRNKAAWLVGKLITPSGTLPFLLPIHQTDDGELFIDTCLTTTAEASIVFGFARSYFMVYAPLPAALVEWLREILPGKTTAELYMAIGCQKHAKTESYREYLVYLQGCNEQFIEAPGIRGMVMLVFTLPGFDRVFKVIKDRFAPQKEMSAAHVRACYQLVKEHDRVGRMADTQEFENFVLEKRHISPALMELLLQEAAEKITDLGEQIVIRHLYIERRMVPLNIWLEQVEGQQLRDAIEEYGNAIRQLAAANIFPGDMLFKNFGVTRHGRVVFYDYDEICYMTEVNFRDIPPPRYPEDELASEPWYSVSPGDVFPEEFRHWLCADPRIGPLFEEMHADLFRADYWRALQNRIREGHVEDVYAYRRRQRFSVRYGEMLF</sequence>
<gene>
    <name evidence="1" type="primary">aceK</name>
    <name type="ordered locus">BWG_3672</name>
</gene>
<feature type="chain" id="PRO_1000212843" description="Isocitrate dehydrogenase kinase/phosphatase">
    <location>
        <begin position="1"/>
        <end position="578"/>
    </location>
</feature>
<feature type="active site" evidence="1">
    <location>
        <position position="371"/>
    </location>
</feature>
<feature type="binding site" evidence="1">
    <location>
        <begin position="315"/>
        <end position="321"/>
    </location>
    <ligand>
        <name>ATP</name>
        <dbReference type="ChEBI" id="CHEBI:30616"/>
    </ligand>
</feature>
<feature type="binding site" evidence="1">
    <location>
        <position position="336"/>
    </location>
    <ligand>
        <name>ATP</name>
        <dbReference type="ChEBI" id="CHEBI:30616"/>
    </ligand>
</feature>
<keyword id="KW-0067">ATP-binding</keyword>
<keyword id="KW-0963">Cytoplasm</keyword>
<keyword id="KW-0329">Glyoxylate bypass</keyword>
<keyword id="KW-0378">Hydrolase</keyword>
<keyword id="KW-0418">Kinase</keyword>
<keyword id="KW-0547">Nucleotide-binding</keyword>
<keyword id="KW-0904">Protein phosphatase</keyword>
<keyword id="KW-0723">Serine/threonine-protein kinase</keyword>
<keyword id="KW-0808">Transferase</keyword>
<keyword id="KW-0816">Tricarboxylic acid cycle</keyword>
<comment type="function">
    <text evidence="1">Bifunctional enzyme which can phosphorylate or dephosphorylate isocitrate dehydrogenase (IDH) on a specific serine residue. This is a regulatory mechanism which enables bacteria to bypass the Krebs cycle via the glyoxylate shunt in response to the source of carbon. When bacteria are grown on glucose, IDH is fully active and unphosphorylated, but when grown on acetate or ethanol, the activity of IDH declines drastically concomitant with its phosphorylation.</text>
</comment>
<comment type="catalytic activity">
    <reaction evidence="1">
        <text>L-seryl-[isocitrate dehydrogenase] + ATP = O-phospho-L-seryl-[isocitrate dehydrogenase] + ADP + H(+)</text>
        <dbReference type="Rhea" id="RHEA:43540"/>
        <dbReference type="Rhea" id="RHEA-COMP:10605"/>
        <dbReference type="Rhea" id="RHEA-COMP:10606"/>
        <dbReference type="ChEBI" id="CHEBI:15378"/>
        <dbReference type="ChEBI" id="CHEBI:29999"/>
        <dbReference type="ChEBI" id="CHEBI:30616"/>
        <dbReference type="ChEBI" id="CHEBI:83421"/>
        <dbReference type="ChEBI" id="CHEBI:456216"/>
        <dbReference type="EC" id="2.7.11.5"/>
    </reaction>
</comment>
<comment type="subcellular location">
    <subcellularLocation>
        <location evidence="1">Cytoplasm</location>
    </subcellularLocation>
</comment>
<comment type="similarity">
    <text evidence="1">Belongs to the AceK family.</text>
</comment>
<organism>
    <name type="scientific">Escherichia coli (strain K12 / MC4100 / BW2952)</name>
    <dbReference type="NCBI Taxonomy" id="595496"/>
    <lineage>
        <taxon>Bacteria</taxon>
        <taxon>Pseudomonadati</taxon>
        <taxon>Pseudomonadota</taxon>
        <taxon>Gammaproteobacteria</taxon>
        <taxon>Enterobacterales</taxon>
        <taxon>Enterobacteriaceae</taxon>
        <taxon>Escherichia</taxon>
    </lineage>
</organism>
<evidence type="ECO:0000255" key="1">
    <source>
        <dbReference type="HAMAP-Rule" id="MF_00747"/>
    </source>
</evidence>
<reference key="1">
    <citation type="journal article" date="2009" name="J. Bacteriol.">
        <title>Genomic sequencing reveals regulatory mutations and recombinational events in the widely used MC4100 lineage of Escherichia coli K-12.</title>
        <authorList>
            <person name="Ferenci T."/>
            <person name="Zhou Z."/>
            <person name="Betteridge T."/>
            <person name="Ren Y."/>
            <person name="Liu Y."/>
            <person name="Feng L."/>
            <person name="Reeves P.R."/>
            <person name="Wang L."/>
        </authorList>
    </citation>
    <scope>NUCLEOTIDE SEQUENCE [LARGE SCALE GENOMIC DNA]</scope>
    <source>
        <strain>K12 / MC4100 / BW2952</strain>
    </source>
</reference>
<proteinExistence type="inferred from homology"/>
<name>ACEK_ECOBW</name>